<dbReference type="EC" id="3.4.23.-"/>
<dbReference type="EMBL" id="DQ093792">
    <property type="protein sequence ID" value="AAZ77659.1"/>
    <property type="molecule type" value="Genomic_DNA"/>
</dbReference>
<dbReference type="SMR" id="Q0R5R3"/>
<dbReference type="MEROPS" id="A02.018"/>
<dbReference type="Proteomes" id="UP000008029">
    <property type="component" value="Genome"/>
</dbReference>
<dbReference type="GO" id="GO:0019013">
    <property type="term" value="C:viral nucleocapsid"/>
    <property type="evidence" value="ECO:0007669"/>
    <property type="project" value="UniProtKB-KW"/>
</dbReference>
<dbReference type="GO" id="GO:0004190">
    <property type="term" value="F:aspartic-type endopeptidase activity"/>
    <property type="evidence" value="ECO:0007669"/>
    <property type="project" value="UniProtKB-KW"/>
</dbReference>
<dbReference type="GO" id="GO:0003676">
    <property type="term" value="F:nucleic acid binding"/>
    <property type="evidence" value="ECO:0007669"/>
    <property type="project" value="InterPro"/>
</dbReference>
<dbReference type="GO" id="GO:0005198">
    <property type="term" value="F:structural molecule activity"/>
    <property type="evidence" value="ECO:0007669"/>
    <property type="project" value="InterPro"/>
</dbReference>
<dbReference type="GO" id="GO:0008270">
    <property type="term" value="F:zinc ion binding"/>
    <property type="evidence" value="ECO:0007669"/>
    <property type="project" value="UniProtKB-KW"/>
</dbReference>
<dbReference type="GO" id="GO:0006508">
    <property type="term" value="P:proteolysis"/>
    <property type="evidence" value="ECO:0007669"/>
    <property type="project" value="UniProtKB-KW"/>
</dbReference>
<dbReference type="GO" id="GO:0039657">
    <property type="term" value="P:symbiont-mediated suppression of host gene expression"/>
    <property type="evidence" value="ECO:0007669"/>
    <property type="project" value="UniProtKB-KW"/>
</dbReference>
<dbReference type="GO" id="GO:0075523">
    <property type="term" value="P:viral translational frameshifting"/>
    <property type="evidence" value="ECO:0007669"/>
    <property type="project" value="UniProtKB-KW"/>
</dbReference>
<dbReference type="Gene3D" id="1.10.1200.30">
    <property type="match status" value="1"/>
</dbReference>
<dbReference type="Gene3D" id="2.40.70.10">
    <property type="entry name" value="Acid Proteases"/>
    <property type="match status" value="1"/>
</dbReference>
<dbReference type="Gene3D" id="1.10.375.10">
    <property type="entry name" value="Human Immunodeficiency Virus Type 1 Capsid Protein"/>
    <property type="match status" value="1"/>
</dbReference>
<dbReference type="Gene3D" id="4.10.60.10">
    <property type="entry name" value="Zinc finger, CCHC-type"/>
    <property type="match status" value="1"/>
</dbReference>
<dbReference type="InterPro" id="IPR001969">
    <property type="entry name" value="Aspartic_peptidase_AS"/>
</dbReference>
<dbReference type="InterPro" id="IPR003139">
    <property type="entry name" value="D_retro_matrix"/>
</dbReference>
<dbReference type="InterPro" id="IPR045345">
    <property type="entry name" value="Gag_p24_C"/>
</dbReference>
<dbReference type="InterPro" id="IPR001995">
    <property type="entry name" value="Peptidase_A2_cat"/>
</dbReference>
<dbReference type="InterPro" id="IPR021109">
    <property type="entry name" value="Peptidase_aspartic_dom_sf"/>
</dbReference>
<dbReference type="InterPro" id="IPR050195">
    <property type="entry name" value="Primate_lentivir_Gag_pol-like"/>
</dbReference>
<dbReference type="InterPro" id="IPR018061">
    <property type="entry name" value="Retropepsins"/>
</dbReference>
<dbReference type="InterPro" id="IPR008916">
    <property type="entry name" value="Retrov_capsid_C"/>
</dbReference>
<dbReference type="InterPro" id="IPR008919">
    <property type="entry name" value="Retrov_capsid_N"/>
</dbReference>
<dbReference type="InterPro" id="IPR010999">
    <property type="entry name" value="Retrovr_matrix"/>
</dbReference>
<dbReference type="InterPro" id="IPR001878">
    <property type="entry name" value="Znf_CCHC"/>
</dbReference>
<dbReference type="InterPro" id="IPR036875">
    <property type="entry name" value="Znf_CCHC_sf"/>
</dbReference>
<dbReference type="PANTHER" id="PTHR40389">
    <property type="entry name" value="ENDOGENOUS RETROVIRUS GROUP K MEMBER 24 GAG POLYPROTEIN-RELATED"/>
    <property type="match status" value="1"/>
</dbReference>
<dbReference type="PANTHER" id="PTHR40389:SF3">
    <property type="entry name" value="IGE-BINDING PROTEIN"/>
    <property type="match status" value="1"/>
</dbReference>
<dbReference type="Pfam" id="PF02228">
    <property type="entry name" value="Gag_p19"/>
    <property type="match status" value="1"/>
</dbReference>
<dbReference type="Pfam" id="PF00607">
    <property type="entry name" value="Gag_p24"/>
    <property type="match status" value="1"/>
</dbReference>
<dbReference type="Pfam" id="PF19317">
    <property type="entry name" value="Gag_p24_C"/>
    <property type="match status" value="1"/>
</dbReference>
<dbReference type="Pfam" id="PF00077">
    <property type="entry name" value="RVP"/>
    <property type="match status" value="1"/>
</dbReference>
<dbReference type="Pfam" id="PF00098">
    <property type="entry name" value="zf-CCHC"/>
    <property type="match status" value="1"/>
</dbReference>
<dbReference type="SMART" id="SM00343">
    <property type="entry name" value="ZnF_C2HC"/>
    <property type="match status" value="2"/>
</dbReference>
<dbReference type="SUPFAM" id="SSF50630">
    <property type="entry name" value="Acid proteases"/>
    <property type="match status" value="1"/>
</dbReference>
<dbReference type="SUPFAM" id="SSF47836">
    <property type="entry name" value="Retroviral matrix proteins"/>
    <property type="match status" value="1"/>
</dbReference>
<dbReference type="SUPFAM" id="SSF47353">
    <property type="entry name" value="Retrovirus capsid dimerization domain-like"/>
    <property type="match status" value="1"/>
</dbReference>
<dbReference type="SUPFAM" id="SSF47943">
    <property type="entry name" value="Retrovirus capsid protein, N-terminal core domain"/>
    <property type="match status" value="1"/>
</dbReference>
<dbReference type="SUPFAM" id="SSF57756">
    <property type="entry name" value="Retrovirus zinc finger-like domains"/>
    <property type="match status" value="1"/>
</dbReference>
<dbReference type="PROSITE" id="PS50175">
    <property type="entry name" value="ASP_PROT_RETROV"/>
    <property type="match status" value="1"/>
</dbReference>
<dbReference type="PROSITE" id="PS00141">
    <property type="entry name" value="ASP_PROTEASE"/>
    <property type="match status" value="1"/>
</dbReference>
<dbReference type="PROSITE" id="PS50158">
    <property type="entry name" value="ZF_CCHC"/>
    <property type="match status" value="1"/>
</dbReference>
<feature type="initiator methionine" description="Removed; by host" evidence="1">
    <location>
        <position position="1"/>
    </location>
</feature>
<feature type="chain" id="PRO_0000259815" description="Gag-Pro polyprotein" evidence="1">
    <location>
        <begin position="2"/>
        <end position="584"/>
    </location>
</feature>
<feature type="chain" id="PRO_0000259816" description="Matrix protein p19" evidence="1">
    <location>
        <begin position="2"/>
        <end position="123"/>
    </location>
</feature>
<feature type="chain" id="PRO_0000259817" description="Capsid protein p24" evidence="1">
    <location>
        <begin position="124"/>
        <end position="337"/>
    </location>
</feature>
<feature type="chain" id="PRO_0000259818" description="Nucleocapsid protein p15-pro" evidence="1">
    <location>
        <begin position="338"/>
        <end position="430"/>
    </location>
</feature>
<feature type="chain" id="PRO_0000259819" description="Protease" evidence="1">
    <location>
        <begin position="431"/>
        <end position="553"/>
    </location>
</feature>
<feature type="peptide" id="PRO_0000259820" description="p1" evidence="1">
    <location>
        <begin position="554"/>
        <end position="561"/>
    </location>
</feature>
<feature type="chain" id="PRO_0000259821" description="Transframe peptide" evidence="1">
    <location>
        <begin position="562"/>
        <end position="584"/>
    </location>
</feature>
<feature type="domain" description="Peptidase A2" evidence="3">
    <location>
        <begin position="457"/>
        <end position="535"/>
    </location>
</feature>
<feature type="zinc finger region" description="CCHC-type 1" evidence="2">
    <location>
        <begin position="349"/>
        <end position="366"/>
    </location>
</feature>
<feature type="zinc finger region" description="CCHC-type 2" evidence="2">
    <location>
        <begin position="372"/>
        <end position="389"/>
    </location>
</feature>
<feature type="region of interest" description="Disordered" evidence="5">
    <location>
        <begin position="95"/>
        <end position="116"/>
    </location>
</feature>
<feature type="short sequence motif" description="PTAP/PSAP motif">
    <location>
        <begin position="98"/>
        <end position="101"/>
    </location>
</feature>
<feature type="short sequence motif" description="PPXY motif">
    <location>
        <begin position="109"/>
        <end position="112"/>
    </location>
</feature>
<feature type="active site" description="For protease activity; shared with dimeric partner" evidence="4">
    <location>
        <position position="462"/>
    </location>
</feature>
<feature type="site" description="Cleavage; by viral protease" evidence="1">
    <location>
        <begin position="123"/>
        <end position="124"/>
    </location>
</feature>
<feature type="site" description="Cleavage; by viral protease" evidence="1">
    <location>
        <begin position="337"/>
        <end position="338"/>
    </location>
</feature>
<feature type="site" description="Cleavage; by viral protease" evidence="1">
    <location>
        <begin position="430"/>
        <end position="431"/>
    </location>
</feature>
<feature type="site" description="Cleavage; by viral protease" evidence="1">
    <location>
        <begin position="553"/>
        <end position="554"/>
    </location>
</feature>
<feature type="site" description="Cleavage; by viral protease" evidence="1">
    <location>
        <begin position="561"/>
        <end position="562"/>
    </location>
</feature>
<feature type="lipid moiety-binding region" description="N-myristoyl glycine; by host" evidence="1">
    <location>
        <position position="2"/>
    </location>
</feature>
<organismHost>
    <name type="scientific">Homo sapiens</name>
    <name type="common">Human</name>
    <dbReference type="NCBI Taxonomy" id="9606"/>
</organismHost>
<sequence>MGKTYSSPINPIPKAPKGLAIHHWLNFLQAAYRLQPGPSEFDFHQLRKFLKLAIKTPVWLNPINYSVLAGLIPKNYPGRVHEIVAILIQETPAREAPPSAPLAEDPQKPPPYPEQAQEASQCLPILHPHGAPAAHRPWQMKDLQAIKQEVSSSAPGSPQFMQTIRLAVQQFDPTAKDLHDLLQYLCSSLVASLHHQQLETLIAQAETQGITGYNPLAGPLRIQANNPNQQGLRKEYQNLWLSAFSALPGNTKDPTWAAILQGPEEPFGSFVERLNVALDNGLPEGTPKDPILRSLAYSNANKECQKLLQARGQTNSPLGEMLRACQTWTPRDKNKILMVQPKKTPPPNQPCFRCGQVGHWSRDCKQPRPPPGPCPVCQDPTHWKRDCPQLKTDTRDSEDLLLDLPCEAPNVRERKNLLRGGGLASPRTILPLIPLSQQKQPTLHIQVSFSNTPPVSVQALLDTGADITVLPACLCPPDSNLQDTTVLGAGGPSTNKFKILPCPVHIHLPFRRQPVTLTACLIDINNQWTILGRDALQQCQSSLYLADQPSKVLPVLAPKLIGLEHLPPPPEVSQFPLNQSASRL</sequence>
<keyword id="KW-0064">Aspartyl protease</keyword>
<keyword id="KW-0167">Capsid protein</keyword>
<keyword id="KW-1262">Eukaryotic host gene expression shutoff by virus</keyword>
<keyword id="KW-1193">Eukaryotic host translation shutoff by virus</keyword>
<keyword id="KW-1190">Host gene expression shutoff by virus</keyword>
<keyword id="KW-0945">Host-virus interaction</keyword>
<keyword id="KW-0378">Hydrolase</keyword>
<keyword id="KW-0449">Lipoprotein</keyword>
<keyword id="KW-0479">Metal-binding</keyword>
<keyword id="KW-0519">Myristate</keyword>
<keyword id="KW-0645">Protease</keyword>
<keyword id="KW-1185">Reference proteome</keyword>
<keyword id="KW-0677">Repeat</keyword>
<keyword id="KW-0688">Ribosomal frameshifting</keyword>
<keyword id="KW-0543">Viral nucleoprotein</keyword>
<keyword id="KW-0946">Virion</keyword>
<keyword id="KW-0862">Zinc</keyword>
<keyword id="KW-0863">Zinc-finger</keyword>
<protein>
    <recommendedName>
        <fullName>Gag-Pro polyprotein</fullName>
    </recommendedName>
    <alternativeName>
        <fullName>Pr76Gag-Pro</fullName>
    </alternativeName>
    <component>
        <recommendedName>
            <fullName>Matrix protein p19</fullName>
            <shortName>MA</shortName>
        </recommendedName>
    </component>
    <component>
        <recommendedName>
            <fullName>Capsid protein p24</fullName>
            <shortName>CA</shortName>
        </recommendedName>
    </component>
    <component>
        <recommendedName>
            <fullName>Nucleocapsid protein p15-pro</fullName>
            <shortName>NC'</shortName>
            <shortName>NC-pro</shortName>
        </recommendedName>
    </component>
    <component>
        <recommendedName>
            <fullName>Protease</fullName>
            <shortName>PR</shortName>
            <ecNumber>3.4.23.-</ecNumber>
        </recommendedName>
    </component>
    <component>
        <recommendedName>
            <fullName>p1</fullName>
        </recommendedName>
    </component>
    <component>
        <recommendedName>
            <fullName>Transframe peptide</fullName>
            <shortName>TFP</shortName>
        </recommendedName>
        <alternativeName>
            <fullName>p8</fullName>
        </alternativeName>
        <alternativeName>
            <fullName>pX</fullName>
        </alternativeName>
    </component>
</protein>
<gene>
    <name type="primary">gag-pro</name>
</gene>
<evidence type="ECO:0000250" key="1"/>
<evidence type="ECO:0000255" key="2">
    <source>
        <dbReference type="PROSITE-ProRule" id="PRU00047"/>
    </source>
</evidence>
<evidence type="ECO:0000255" key="3">
    <source>
        <dbReference type="PROSITE-ProRule" id="PRU00275"/>
    </source>
</evidence>
<evidence type="ECO:0000255" key="4">
    <source>
        <dbReference type="PROSITE-ProRule" id="PRU10094"/>
    </source>
</evidence>
<evidence type="ECO:0000256" key="5">
    <source>
        <dbReference type="SAM" id="MobiDB-lite"/>
    </source>
</evidence>
<evidence type="ECO:0000305" key="6"/>
<proteinExistence type="inferred from homology"/>
<name>PRO_HTL32</name>
<comment type="function">
    <text evidence="1">Matrix protein p19 targets Gag, Gag-Pro and Gag-Pro-Pol polyproteins to the plasma membrane via a multipartite membrane binding signal, that includes its myristoylated N-terminus. Also mediates nuclear localization of the preintegration complex (By similarity).</text>
</comment>
<comment type="function">
    <text evidence="1">Capsid protein p24 forms the conical core of the virus that encapsulates the genomic RNA-nucleocapsid complex.</text>
</comment>
<comment type="function">
    <text evidence="1">Nucleocapsid protein p15 is involved in the packaging and encapsidation of two copies of the genome.</text>
</comment>
<comment type="function">
    <text evidence="1">The aspartyl protease mediates proteolytic cleavages of Gag, Gag-Pro and Gag-Pro-Pol polyproteins during or shortly after the release of the virion from the plasma membrane. Cleavages take place as an ordered, step-wise cascade to yield mature proteins. This process is called maturation. Displays maximal activity during the budding process just prior to particle release from the cell. Hydrolyzes host EIF4GI in order to shut off the capped cellular mRNA translation. The resulting inhibition of cellular protein synthesis serves to ensure maximal viral gene expression and to evade host immune response (By similarity).</text>
</comment>
<comment type="subunit">
    <text evidence="1">Interacts with human TSG101. This interaction is essential for budding and release of viral particles (By similarity).</text>
</comment>
<comment type="subcellular location">
    <molecule>Matrix protein p19</molecule>
    <subcellularLocation>
        <location evidence="6">Virion</location>
    </subcellularLocation>
</comment>
<comment type="subcellular location">
    <molecule>Capsid protein p24</molecule>
    <subcellularLocation>
        <location evidence="6">Virion</location>
    </subcellularLocation>
</comment>
<comment type="subcellular location">
    <molecule>Nucleocapsid protein p15-pro</molecule>
    <subcellularLocation>
        <location evidence="6">Virion</location>
    </subcellularLocation>
</comment>
<comment type="alternative products">
    <event type="ribosomal frameshifting"/>
    <isoform>
        <id>Q0R5R3-1</id>
        <name>Gag-Pro polyprotein</name>
        <sequence type="displayed"/>
    </isoform>
    <isoform>
        <id>Q0R5R4-1</id>
        <name>Gag polyprotein</name>
        <sequence type="external"/>
    </isoform>
    <isoform>
        <id>Q0R5R2-1</id>
        <name>Gag-Pol polyprotein</name>
        <sequence type="external"/>
    </isoform>
    <text>This strategy of translation probably allows the virus to modulate the quantity of each viral protein.</text>
</comment>
<comment type="domain">
    <text evidence="1">Late-budding domains (L domains) are short sequence motifs essential for viral particle release. They can occur individually or in close proximity within structural proteins. They interacts with sorting cellular proteins of the multivesicular body (MVB) pathway. Most of these proteins are class E vacuolar protein sorting factors belonging to ESCRT-I, ESCRT-II or ESCRT-III complexes. Matrix protein p19 contains two L domains: a PTAP/PSAP motif which interacts with the UEV domain of TSG101, and a PPXY motif which binds to the WW domains of HECT (homologous to E6-AP C-terminus) E3 ubiquitin ligases (By similarity).</text>
</comment>
<comment type="domain">
    <text evidence="1">The capsid protein N-terminus seems to be involved in Gag-Gag interactions.</text>
</comment>
<comment type="PTM">
    <text evidence="1">Specific enzymatic cleavages by the viral protease yield mature proteins. The polyprotein is cleaved during and after budding, this process is termed maturation. The protease is autoproteolytically processed at its N- and C-termini (By similarity).</text>
</comment>
<comment type="miscellaneous">
    <molecule>Isoform Gag-Pro polyprotein</molecule>
    <text>Produced by -1 ribosomal frameshifting at the gag-pro genes boundary.</text>
</comment>
<reference key="1">
    <citation type="journal article" date="2006" name="J. Virol.">
        <title>Ancient origin and molecular features of the novel human T-lymphotropic virus type 3 revealed by complete genome analysis.</title>
        <authorList>
            <person name="Switzer W.M."/>
            <person name="Qari S.H."/>
            <person name="Wolfe N.D."/>
            <person name="Burke D.S."/>
            <person name="Folks T.M."/>
            <person name="Heneine W."/>
        </authorList>
    </citation>
    <scope>NUCLEOTIDE SEQUENCE [GENOMIC DNA]</scope>
</reference>
<organism>
    <name type="scientific">Human T-cell leukemia virus 3 (strain 2026ND)</name>
    <name type="common">HTLV-3</name>
    <dbReference type="NCBI Taxonomy" id="402036"/>
    <lineage>
        <taxon>Viruses</taxon>
        <taxon>Riboviria</taxon>
        <taxon>Pararnavirae</taxon>
        <taxon>Artverviricota</taxon>
        <taxon>Revtraviricetes</taxon>
        <taxon>Ortervirales</taxon>
        <taxon>Retroviridae</taxon>
        <taxon>Orthoretrovirinae</taxon>
        <taxon>Deltaretrovirus</taxon>
        <taxon>Primate T-lymphotropic virus 3</taxon>
    </lineage>
</organism>
<accession>Q0R5R3</accession>